<feature type="chain" id="PRO_1000071222" description="Peptidyl-tRNA hydrolase">
    <location>
        <begin position="1"/>
        <end position="194"/>
    </location>
</feature>
<feature type="active site" description="Proton acceptor" evidence="1">
    <location>
        <position position="22"/>
    </location>
</feature>
<feature type="binding site" evidence="1">
    <location>
        <position position="17"/>
    </location>
    <ligand>
        <name>tRNA</name>
        <dbReference type="ChEBI" id="CHEBI:17843"/>
    </ligand>
</feature>
<feature type="binding site" evidence="1">
    <location>
        <position position="68"/>
    </location>
    <ligand>
        <name>tRNA</name>
        <dbReference type="ChEBI" id="CHEBI:17843"/>
    </ligand>
</feature>
<feature type="binding site" evidence="1">
    <location>
        <position position="70"/>
    </location>
    <ligand>
        <name>tRNA</name>
        <dbReference type="ChEBI" id="CHEBI:17843"/>
    </ligand>
</feature>
<feature type="binding site" evidence="1">
    <location>
        <position position="116"/>
    </location>
    <ligand>
        <name>tRNA</name>
        <dbReference type="ChEBI" id="CHEBI:17843"/>
    </ligand>
</feature>
<feature type="site" description="Discriminates between blocked and unblocked aminoacyl-tRNA" evidence="1">
    <location>
        <position position="12"/>
    </location>
</feature>
<feature type="site" description="Stabilizes the basic form of H active site to accept a proton" evidence="1">
    <location>
        <position position="95"/>
    </location>
</feature>
<keyword id="KW-0963">Cytoplasm</keyword>
<keyword id="KW-0378">Hydrolase</keyword>
<keyword id="KW-1185">Reference proteome</keyword>
<keyword id="KW-0694">RNA-binding</keyword>
<keyword id="KW-0820">tRNA-binding</keyword>
<gene>
    <name evidence="1" type="primary">pth</name>
    <name type="ordered locus">Asuc_1412</name>
</gene>
<sequence length="194" mass="21305">MSEIKLIVGLGNPGDKYADTRHNAGEWLIDRLSRRFNFTLKDEAKFFGKTARTVIDGHEIRFLVPATFMNLSGKAIGALASFYRIRPEEILLAHDELDLPPGTVKIKQGGGHGGHNGLKDTIAQLGNNKNFYRLRIGIGHPGDRNLVTSYVLGKPSPADWALIDKALDEAVVCVEILLKDGITKATNRLNGFKA</sequence>
<comment type="function">
    <text evidence="1">Hydrolyzes ribosome-free peptidyl-tRNAs (with 1 or more amino acids incorporated), which drop off the ribosome during protein synthesis, or as a result of ribosome stalling.</text>
</comment>
<comment type="function">
    <text evidence="1">Catalyzes the release of premature peptidyl moieties from peptidyl-tRNA molecules trapped in stalled 50S ribosomal subunits, and thus maintains levels of free tRNAs and 50S ribosomes.</text>
</comment>
<comment type="catalytic activity">
    <reaction evidence="1">
        <text>an N-acyl-L-alpha-aminoacyl-tRNA + H2O = an N-acyl-L-amino acid + a tRNA + H(+)</text>
        <dbReference type="Rhea" id="RHEA:54448"/>
        <dbReference type="Rhea" id="RHEA-COMP:10123"/>
        <dbReference type="Rhea" id="RHEA-COMP:13883"/>
        <dbReference type="ChEBI" id="CHEBI:15377"/>
        <dbReference type="ChEBI" id="CHEBI:15378"/>
        <dbReference type="ChEBI" id="CHEBI:59874"/>
        <dbReference type="ChEBI" id="CHEBI:78442"/>
        <dbReference type="ChEBI" id="CHEBI:138191"/>
        <dbReference type="EC" id="3.1.1.29"/>
    </reaction>
</comment>
<comment type="subunit">
    <text evidence="1">Monomer.</text>
</comment>
<comment type="subcellular location">
    <subcellularLocation>
        <location evidence="1">Cytoplasm</location>
    </subcellularLocation>
</comment>
<comment type="similarity">
    <text evidence="1">Belongs to the PTH family.</text>
</comment>
<dbReference type="EC" id="3.1.1.29" evidence="1"/>
<dbReference type="EMBL" id="CP000746">
    <property type="protein sequence ID" value="ABR74771.1"/>
    <property type="molecule type" value="Genomic_DNA"/>
</dbReference>
<dbReference type="RefSeq" id="WP_012073148.1">
    <property type="nucleotide sequence ID" value="NC_009655.1"/>
</dbReference>
<dbReference type="SMR" id="A6VP74"/>
<dbReference type="STRING" id="339671.Asuc_1412"/>
<dbReference type="KEGG" id="asu:Asuc_1412"/>
<dbReference type="eggNOG" id="COG0193">
    <property type="taxonomic scope" value="Bacteria"/>
</dbReference>
<dbReference type="HOGENOM" id="CLU_062456_3_1_6"/>
<dbReference type="OrthoDB" id="9800507at2"/>
<dbReference type="Proteomes" id="UP000001114">
    <property type="component" value="Chromosome"/>
</dbReference>
<dbReference type="GO" id="GO:0005737">
    <property type="term" value="C:cytoplasm"/>
    <property type="evidence" value="ECO:0007669"/>
    <property type="project" value="UniProtKB-SubCell"/>
</dbReference>
<dbReference type="GO" id="GO:0004045">
    <property type="term" value="F:peptidyl-tRNA hydrolase activity"/>
    <property type="evidence" value="ECO:0007669"/>
    <property type="project" value="UniProtKB-UniRule"/>
</dbReference>
<dbReference type="GO" id="GO:0000049">
    <property type="term" value="F:tRNA binding"/>
    <property type="evidence" value="ECO:0007669"/>
    <property type="project" value="UniProtKB-UniRule"/>
</dbReference>
<dbReference type="GO" id="GO:0006515">
    <property type="term" value="P:protein quality control for misfolded or incompletely synthesized proteins"/>
    <property type="evidence" value="ECO:0007669"/>
    <property type="project" value="UniProtKB-UniRule"/>
</dbReference>
<dbReference type="GO" id="GO:0072344">
    <property type="term" value="P:rescue of stalled ribosome"/>
    <property type="evidence" value="ECO:0007669"/>
    <property type="project" value="UniProtKB-UniRule"/>
</dbReference>
<dbReference type="CDD" id="cd00462">
    <property type="entry name" value="PTH"/>
    <property type="match status" value="1"/>
</dbReference>
<dbReference type="FunFam" id="3.40.50.1470:FF:000001">
    <property type="entry name" value="Peptidyl-tRNA hydrolase"/>
    <property type="match status" value="1"/>
</dbReference>
<dbReference type="Gene3D" id="3.40.50.1470">
    <property type="entry name" value="Peptidyl-tRNA hydrolase"/>
    <property type="match status" value="1"/>
</dbReference>
<dbReference type="HAMAP" id="MF_00083">
    <property type="entry name" value="Pept_tRNA_hydro_bact"/>
    <property type="match status" value="1"/>
</dbReference>
<dbReference type="InterPro" id="IPR001328">
    <property type="entry name" value="Pept_tRNA_hydro"/>
</dbReference>
<dbReference type="InterPro" id="IPR018171">
    <property type="entry name" value="Pept_tRNA_hydro_CS"/>
</dbReference>
<dbReference type="InterPro" id="IPR036416">
    <property type="entry name" value="Pept_tRNA_hydro_sf"/>
</dbReference>
<dbReference type="NCBIfam" id="TIGR00447">
    <property type="entry name" value="pth"/>
    <property type="match status" value="1"/>
</dbReference>
<dbReference type="PANTHER" id="PTHR17224">
    <property type="entry name" value="PEPTIDYL-TRNA HYDROLASE"/>
    <property type="match status" value="1"/>
</dbReference>
<dbReference type="PANTHER" id="PTHR17224:SF1">
    <property type="entry name" value="PEPTIDYL-TRNA HYDROLASE"/>
    <property type="match status" value="1"/>
</dbReference>
<dbReference type="Pfam" id="PF01195">
    <property type="entry name" value="Pept_tRNA_hydro"/>
    <property type="match status" value="1"/>
</dbReference>
<dbReference type="SUPFAM" id="SSF53178">
    <property type="entry name" value="Peptidyl-tRNA hydrolase-like"/>
    <property type="match status" value="1"/>
</dbReference>
<dbReference type="PROSITE" id="PS01195">
    <property type="entry name" value="PEPT_TRNA_HYDROL_1"/>
    <property type="match status" value="1"/>
</dbReference>
<dbReference type="PROSITE" id="PS01196">
    <property type="entry name" value="PEPT_TRNA_HYDROL_2"/>
    <property type="match status" value="1"/>
</dbReference>
<accession>A6VP74</accession>
<organism>
    <name type="scientific">Actinobacillus succinogenes (strain ATCC 55618 / DSM 22257 / CCUG 43843 / 130Z)</name>
    <dbReference type="NCBI Taxonomy" id="339671"/>
    <lineage>
        <taxon>Bacteria</taxon>
        <taxon>Pseudomonadati</taxon>
        <taxon>Pseudomonadota</taxon>
        <taxon>Gammaproteobacteria</taxon>
        <taxon>Pasteurellales</taxon>
        <taxon>Pasteurellaceae</taxon>
        <taxon>Actinobacillus</taxon>
    </lineage>
</organism>
<evidence type="ECO:0000255" key="1">
    <source>
        <dbReference type="HAMAP-Rule" id="MF_00083"/>
    </source>
</evidence>
<reference key="1">
    <citation type="journal article" date="2010" name="BMC Genomics">
        <title>A genomic perspective on the potential of Actinobacillus succinogenes for industrial succinate production.</title>
        <authorList>
            <person name="McKinlay J.B."/>
            <person name="Laivenieks M."/>
            <person name="Schindler B.D."/>
            <person name="McKinlay A.A."/>
            <person name="Siddaramappa S."/>
            <person name="Challacombe J.F."/>
            <person name="Lowry S.R."/>
            <person name="Clum A."/>
            <person name="Lapidus A.L."/>
            <person name="Burkhart K.B."/>
            <person name="Harkins V."/>
            <person name="Vieille C."/>
        </authorList>
    </citation>
    <scope>NUCLEOTIDE SEQUENCE [LARGE SCALE GENOMIC DNA]</scope>
    <source>
        <strain>ATCC 55618 / DSM 22257 / CCUG 43843 / 130Z</strain>
    </source>
</reference>
<protein>
    <recommendedName>
        <fullName evidence="1">Peptidyl-tRNA hydrolase</fullName>
        <shortName evidence="1">Pth</shortName>
        <ecNumber evidence="1">3.1.1.29</ecNumber>
    </recommendedName>
</protein>
<name>PTH_ACTSZ</name>
<proteinExistence type="inferred from homology"/>